<reference key="1">
    <citation type="journal article" date="2000" name="J. Biol. Chem.">
        <title>A novel membrane-anchored Rab5 interacting protein required for homotypic endosome fusion.</title>
        <authorList>
            <person name="Hoffenberg S."/>
            <person name="Liu X."/>
            <person name="Nikolova L."/>
            <person name="Hall H.S."/>
            <person name="Dai W."/>
            <person name="Baughn R.E."/>
            <person name="Dickey B.F."/>
            <person name="Barbieri M.A."/>
            <person name="Aballay A."/>
            <person name="Stahl P.D."/>
            <person name="Knoll B.J."/>
        </authorList>
    </citation>
    <scope>NUCLEOTIDE SEQUENCE [MRNA] (ISOFORM 1)</scope>
    <scope>SUBCELLULAR LOCATION</scope>
    <scope>TISSUE SPECIFICITY</scope>
    <scope>INTERACTION WITH RAB5A</scope>
    <source>
        <tissue>B-cell</tissue>
    </source>
</reference>
<reference key="2">
    <citation type="journal article" date="2006" name="DNA Cell Biol.">
        <title>Characterization of the structures involved in localization of the SUN proteins to the nuclear envelope and the centrosome.</title>
        <authorList>
            <person name="Wang Q."/>
            <person name="Du X."/>
            <person name="Cai Z."/>
            <person name="Greene M.I."/>
        </authorList>
    </citation>
    <scope>NUCLEOTIDE SEQUENCE [MRNA] (ISOFORM 1)</scope>
    <scope>SUBCELLULAR LOCATION</scope>
    <scope>SUBUNIT</scope>
    <scope>ASSOCIATION WITH THE CENTROSOME</scope>
</reference>
<reference key="3">
    <citation type="journal article" date="1998" name="DNA Res.">
        <title>Prediction of the coding sequences of unidentified human genes. X. The complete sequences of 100 new cDNA clones from brain which can code for large proteins in vitro.</title>
        <authorList>
            <person name="Ishikawa K."/>
            <person name="Nagase T."/>
            <person name="Suyama M."/>
            <person name="Miyajima N."/>
            <person name="Tanaka A."/>
            <person name="Kotani H."/>
            <person name="Nomura N."/>
            <person name="Ohara O."/>
        </authorList>
    </citation>
    <scope>NUCLEOTIDE SEQUENCE [LARGE SCALE MRNA] (ISOFORM 1)</scope>
    <source>
        <tissue>Brain</tissue>
    </source>
</reference>
<reference key="4">
    <citation type="journal article" date="2004" name="Genome Biol.">
        <title>A genome annotation-driven approach to cloning the human ORFeome.</title>
        <authorList>
            <person name="Collins J.E."/>
            <person name="Wright C.L."/>
            <person name="Edwards C.A."/>
            <person name="Davis M.P."/>
            <person name="Grinham J.A."/>
            <person name="Cole C.G."/>
            <person name="Goward M.E."/>
            <person name="Aguado B."/>
            <person name="Mallya M."/>
            <person name="Mokrab Y."/>
            <person name="Huckle E.J."/>
            <person name="Beare D.M."/>
            <person name="Dunham I."/>
        </authorList>
    </citation>
    <scope>NUCLEOTIDE SEQUENCE [LARGE SCALE MRNA] (ISOFORM 1)</scope>
</reference>
<reference key="5">
    <citation type="journal article" date="2007" name="BMC Genomics">
        <title>The full-ORF clone resource of the German cDNA consortium.</title>
        <authorList>
            <person name="Bechtel S."/>
            <person name="Rosenfelder H."/>
            <person name="Duda A."/>
            <person name="Schmidt C.P."/>
            <person name="Ernst U."/>
            <person name="Wellenreuther R."/>
            <person name="Mehrle A."/>
            <person name="Schuster C."/>
            <person name="Bahr A."/>
            <person name="Bloecker H."/>
            <person name="Heubner D."/>
            <person name="Hoerlein A."/>
            <person name="Michel G."/>
            <person name="Wedler H."/>
            <person name="Koehrer K."/>
            <person name="Ottenwaelder B."/>
            <person name="Poustka A."/>
            <person name="Wiemann S."/>
            <person name="Schupp I."/>
        </authorList>
    </citation>
    <scope>NUCLEOTIDE SEQUENCE [LARGE SCALE MRNA] (ISOFORM 1)</scope>
    <source>
        <tissue>Fetal kidney</tissue>
    </source>
</reference>
<reference key="6">
    <citation type="journal article" date="1999" name="Nature">
        <title>The DNA sequence of human chromosome 22.</title>
        <authorList>
            <person name="Dunham I."/>
            <person name="Hunt A.R."/>
            <person name="Collins J.E."/>
            <person name="Bruskiewich R."/>
            <person name="Beare D.M."/>
            <person name="Clamp M."/>
            <person name="Smink L.J."/>
            <person name="Ainscough R."/>
            <person name="Almeida J.P."/>
            <person name="Babbage A.K."/>
            <person name="Bagguley C."/>
            <person name="Bailey J."/>
            <person name="Barlow K.F."/>
            <person name="Bates K.N."/>
            <person name="Beasley O.P."/>
            <person name="Bird C.P."/>
            <person name="Blakey S.E."/>
            <person name="Bridgeman A.M."/>
            <person name="Buck D."/>
            <person name="Burgess J."/>
            <person name="Burrill W.D."/>
            <person name="Burton J."/>
            <person name="Carder C."/>
            <person name="Carter N.P."/>
            <person name="Chen Y."/>
            <person name="Clark G."/>
            <person name="Clegg S.M."/>
            <person name="Cobley V.E."/>
            <person name="Cole C.G."/>
            <person name="Collier R.E."/>
            <person name="Connor R."/>
            <person name="Conroy D."/>
            <person name="Corby N.R."/>
            <person name="Coville G.J."/>
            <person name="Cox A.V."/>
            <person name="Davis J."/>
            <person name="Dawson E."/>
            <person name="Dhami P.D."/>
            <person name="Dockree C."/>
            <person name="Dodsworth S.J."/>
            <person name="Durbin R.M."/>
            <person name="Ellington A.G."/>
            <person name="Evans K.L."/>
            <person name="Fey J.M."/>
            <person name="Fleming K."/>
            <person name="French L."/>
            <person name="Garner A.A."/>
            <person name="Gilbert J.G.R."/>
            <person name="Goward M.E."/>
            <person name="Grafham D.V."/>
            <person name="Griffiths M.N.D."/>
            <person name="Hall C."/>
            <person name="Hall R.E."/>
            <person name="Hall-Tamlyn G."/>
            <person name="Heathcott R.W."/>
            <person name="Ho S."/>
            <person name="Holmes S."/>
            <person name="Hunt S.E."/>
            <person name="Jones M.C."/>
            <person name="Kershaw J."/>
            <person name="Kimberley A.M."/>
            <person name="King A."/>
            <person name="Laird G.K."/>
            <person name="Langford C.F."/>
            <person name="Leversha M.A."/>
            <person name="Lloyd C."/>
            <person name="Lloyd D.M."/>
            <person name="Martyn I.D."/>
            <person name="Mashreghi-Mohammadi M."/>
            <person name="Matthews L.H."/>
            <person name="Mccann O.T."/>
            <person name="Mcclay J."/>
            <person name="Mclaren S."/>
            <person name="McMurray A.A."/>
            <person name="Milne S.A."/>
            <person name="Mortimore B.J."/>
            <person name="Odell C.N."/>
            <person name="Pavitt R."/>
            <person name="Pearce A.V."/>
            <person name="Pearson D."/>
            <person name="Phillimore B.J.C.T."/>
            <person name="Phillips S.H."/>
            <person name="Plumb R.W."/>
            <person name="Ramsay H."/>
            <person name="Ramsey Y."/>
            <person name="Rogers L."/>
            <person name="Ross M.T."/>
            <person name="Scott C.E."/>
            <person name="Sehra H.K."/>
            <person name="Skuce C.D."/>
            <person name="Smalley S."/>
            <person name="Smith M.L."/>
            <person name="Soderlund C."/>
            <person name="Spragon L."/>
            <person name="Steward C.A."/>
            <person name="Sulston J.E."/>
            <person name="Swann R.M."/>
            <person name="Vaudin M."/>
            <person name="Wall M."/>
            <person name="Wallis J.M."/>
            <person name="Whiteley M.N."/>
            <person name="Willey D.L."/>
            <person name="Williams L."/>
            <person name="Williams S.A."/>
            <person name="Williamson H."/>
            <person name="Wilmer T.E."/>
            <person name="Wilming L."/>
            <person name="Wright C.L."/>
            <person name="Hubbard T."/>
            <person name="Bentley D.R."/>
            <person name="Beck S."/>
            <person name="Rogers J."/>
            <person name="Shimizu N."/>
            <person name="Minoshima S."/>
            <person name="Kawasaki K."/>
            <person name="Sasaki T."/>
            <person name="Asakawa S."/>
            <person name="Kudoh J."/>
            <person name="Shintani A."/>
            <person name="Shibuya K."/>
            <person name="Yoshizaki Y."/>
            <person name="Aoki N."/>
            <person name="Mitsuyama S."/>
            <person name="Roe B.A."/>
            <person name="Chen F."/>
            <person name="Chu L."/>
            <person name="Crabtree J."/>
            <person name="Deschamps S."/>
            <person name="Do A."/>
            <person name="Do T."/>
            <person name="Dorman A."/>
            <person name="Fang F."/>
            <person name="Fu Y."/>
            <person name="Hu P."/>
            <person name="Hua A."/>
            <person name="Kenton S."/>
            <person name="Lai H."/>
            <person name="Lao H.I."/>
            <person name="Lewis J."/>
            <person name="Lewis S."/>
            <person name="Lin S.-P."/>
            <person name="Loh P."/>
            <person name="Malaj E."/>
            <person name="Nguyen T."/>
            <person name="Pan H."/>
            <person name="Phan S."/>
            <person name="Qi S."/>
            <person name="Qian Y."/>
            <person name="Ray L."/>
            <person name="Ren Q."/>
            <person name="Shaull S."/>
            <person name="Sloan D."/>
            <person name="Song L."/>
            <person name="Wang Q."/>
            <person name="Wang Y."/>
            <person name="Wang Z."/>
            <person name="White J."/>
            <person name="Willingham D."/>
            <person name="Wu H."/>
            <person name="Yao Z."/>
            <person name="Zhan M."/>
            <person name="Zhang G."/>
            <person name="Chissoe S."/>
            <person name="Murray J."/>
            <person name="Miller N."/>
            <person name="Minx P."/>
            <person name="Fulton R."/>
            <person name="Johnson D."/>
            <person name="Bemis G."/>
            <person name="Bentley D."/>
            <person name="Bradshaw H."/>
            <person name="Bourne S."/>
            <person name="Cordes M."/>
            <person name="Du Z."/>
            <person name="Fulton L."/>
            <person name="Goela D."/>
            <person name="Graves T."/>
            <person name="Hawkins J."/>
            <person name="Hinds K."/>
            <person name="Kemp K."/>
            <person name="Latreille P."/>
            <person name="Layman D."/>
            <person name="Ozersky P."/>
            <person name="Rohlfing T."/>
            <person name="Scheet P."/>
            <person name="Walker C."/>
            <person name="Wamsley A."/>
            <person name="Wohldmann P."/>
            <person name="Pepin K."/>
            <person name="Nelson J."/>
            <person name="Korf I."/>
            <person name="Bedell J.A."/>
            <person name="Hillier L.W."/>
            <person name="Mardis E."/>
            <person name="Waterston R."/>
            <person name="Wilson R."/>
            <person name="Emanuel B.S."/>
            <person name="Shaikh T."/>
            <person name="Kurahashi H."/>
            <person name="Saitta S."/>
            <person name="Budarf M.L."/>
            <person name="McDermid H.E."/>
            <person name="Johnson A."/>
            <person name="Wong A.C.C."/>
            <person name="Morrow B.E."/>
            <person name="Edelmann L."/>
            <person name="Kim U.J."/>
            <person name="Shizuya H."/>
            <person name="Simon M.I."/>
            <person name="Dumanski J.P."/>
            <person name="Peyrard M."/>
            <person name="Kedra D."/>
            <person name="Seroussi E."/>
            <person name="Fransson I."/>
            <person name="Tapia I."/>
            <person name="Bruder C.E."/>
            <person name="O'Brien K.P."/>
            <person name="Wilkinson P."/>
            <person name="Bodenteich A."/>
            <person name="Hartman K."/>
            <person name="Hu X."/>
            <person name="Khan A.S."/>
            <person name="Lane L."/>
            <person name="Tilahun Y."/>
            <person name="Wright H."/>
        </authorList>
    </citation>
    <scope>NUCLEOTIDE SEQUENCE [LARGE SCALE GENOMIC DNA]</scope>
</reference>
<reference key="7">
    <citation type="journal article" date="2004" name="Genome Res.">
        <title>The status, quality, and expansion of the NIH full-length cDNA project: the Mammalian Gene Collection (MGC).</title>
        <authorList>
            <consortium name="The MGC Project Team"/>
        </authorList>
    </citation>
    <scope>NUCLEOTIDE SEQUENCE [LARGE SCALE MRNA] (ISOFORMS 1; 2 AND 3)</scope>
    <scope>VARIANTS ARG-89 AND SER-671</scope>
    <source>
        <tissue>Brain</tissue>
        <tissue>Pancreas</tissue>
    </source>
</reference>
<reference key="8">
    <citation type="journal article" date="1999" name="Development">
        <title>UNC-84 localizes to the nuclear envelope and is required for nuclear migration and anchoring during C. elegans development.</title>
        <authorList>
            <person name="Malone C.J."/>
            <person name="Fixsen W.D."/>
            <person name="Horvitz H.R."/>
            <person name="Han M."/>
        </authorList>
    </citation>
    <scope>NUCLEOTIDE SEQUENCE [MRNA] OF 278-717 (ISOFORM 1)</scope>
</reference>
<reference key="9">
    <citation type="journal article" date="2002" name="Biochim. Biophys. Acta">
        <title>Isolation of differentially expressed genes in human heart tissues.</title>
        <authorList>
            <person name="Sun G."/>
            <person name="Yuen Chan S."/>
            <person name="Yuan Y."/>
            <person name="Wang Chan K."/>
            <person name="Qiu G."/>
            <person name="Sun K."/>
            <person name="Ping Leung M."/>
        </authorList>
    </citation>
    <scope>TISSUE SPECIFICITY</scope>
</reference>
<reference key="10">
    <citation type="journal article" date="2002" name="Mol. Cell. Proteomics">
        <title>A mass spectrometry-based proteomic approach for identification of serine/threonine-phosphorylated proteins by enrichment with phospho-specific antibodies: identification of a novel protein, Frigg, as a protein kinase A substrate.</title>
        <authorList>
            <person name="Gronborg M."/>
            <person name="Kristiansen T.Z."/>
            <person name="Stensballe A."/>
            <person name="Andersen J.S."/>
            <person name="Ohara O."/>
            <person name="Mann M."/>
            <person name="Jensen O.N."/>
            <person name="Pandey A."/>
        </authorList>
    </citation>
    <scope>PHOSPHORYLATION AT SER-12; SER-54 AND SER-116</scope>
</reference>
<reference key="11">
    <citation type="journal article" date="2003" name="Science">
        <title>Nuclear membrane proteins with potential disease links found by subtractive proteomics.</title>
        <authorList>
            <person name="Schirmer E.C."/>
            <person name="Florens L."/>
            <person name="Guan T."/>
            <person name="Yates J.R. III"/>
            <person name="Gerace L."/>
        </authorList>
    </citation>
    <scope>IDENTIFICATION BY MASS SPECTROMETRY</scope>
    <scope>SUBCELLULAR LOCATION</scope>
</reference>
<reference key="12">
    <citation type="journal article" date="2004" name="J. Biol. Chem.">
        <title>Sun2 is a novel mammalian inner nuclear membrane protein.</title>
        <authorList>
            <person name="Hodzic D.M."/>
            <person name="Yeater D.B."/>
            <person name="Bengtsson L."/>
            <person name="Otto H."/>
            <person name="Stahl P.D."/>
        </authorList>
    </citation>
    <scope>SUBCELLULAR LOCATION</scope>
    <scope>TOPOLOGY</scope>
</reference>
<reference key="13">
    <citation type="journal article" date="2006" name="Cell">
        <title>Global, in vivo, and site-specific phosphorylation dynamics in signaling networks.</title>
        <authorList>
            <person name="Olsen J.V."/>
            <person name="Blagoev B."/>
            <person name="Gnad F."/>
            <person name="Macek B."/>
            <person name="Kumar C."/>
            <person name="Mortensen P."/>
            <person name="Mann M."/>
        </authorList>
    </citation>
    <scope>PHOSPHORYLATION [LARGE SCALE ANALYSIS] AT SER-54</scope>
    <scope>IDENTIFICATION BY MASS SPECTROMETRY [LARGE SCALE ANALYSIS]</scope>
    <source>
        <tissue>Cervix carcinoma</tissue>
    </source>
</reference>
<reference key="14">
    <citation type="journal article" date="2007" name="J. Cell Biol.">
        <title>Functional association of Sun1 with nuclear pore complexes.</title>
        <authorList>
            <person name="Liu Q."/>
            <person name="Pante N."/>
            <person name="Misteli T."/>
            <person name="Elsagga M."/>
            <person name="Crisp M."/>
            <person name="Hodzic D."/>
            <person name="Burke B."/>
            <person name="Roux K.J."/>
        </authorList>
    </citation>
    <scope>SUBCELLULAR LOCATION</scope>
</reference>
<reference key="15">
    <citation type="journal article" date="2008" name="Biochim. Biophys. Acta">
        <title>Sun1 forms immobile macromolecular assemblies at the nuclear envelope.</title>
        <authorList>
            <person name="Lu W."/>
            <person name="Gotzmann J."/>
            <person name="Sironi L."/>
            <person name="Jaeger V.M."/>
            <person name="Schneider M."/>
            <person name="Luke Y."/>
            <person name="Uhlen M."/>
            <person name="Szigyarto C.A."/>
            <person name="Brachner A."/>
            <person name="Ellenberg J."/>
            <person name="Foisner R."/>
            <person name="Noegel A.A."/>
            <person name="Karakesisoglou I."/>
        </authorList>
    </citation>
    <scope>INTERACTION WITH SUN1</scope>
</reference>
<reference key="16">
    <citation type="journal article" date="2008" name="Exp. Cell Res.">
        <title>Structural requirements for the assembly of LINC complexes and their function in cellular mechanical stiffness.</title>
        <authorList>
            <person name="Stewart-Hutchinson P.J."/>
            <person name="Hale C.M."/>
            <person name="Wirtz D."/>
            <person name="Hodzic D."/>
        </authorList>
    </citation>
    <scope>INTERACTION WITH SYNE1; SYNE2 AND SYNE3</scope>
    <scope>FUNCTION OF THE LINC COMPLEXES</scope>
</reference>
<reference key="17">
    <citation type="journal article" date="2009" name="J. Proteome Res.">
        <title>Glycoproteomics analysis of human liver tissue by combination of multiple enzyme digestion and hydrazide chemistry.</title>
        <authorList>
            <person name="Chen R."/>
            <person name="Jiang X."/>
            <person name="Sun D."/>
            <person name="Han G."/>
            <person name="Wang F."/>
            <person name="Ye M."/>
            <person name="Wang L."/>
            <person name="Zou H."/>
        </authorList>
    </citation>
    <scope>GLYCOSYLATION [LARGE SCALE ANALYSIS] AT ASN-636</scope>
    <source>
        <tissue>Liver</tissue>
    </source>
</reference>
<reference key="18">
    <citation type="journal article" date="2009" name="Sci. Signal.">
        <title>Quantitative phosphoproteomic analysis of T cell receptor signaling reveals system-wide modulation of protein-protein interactions.</title>
        <authorList>
            <person name="Mayya V."/>
            <person name="Lundgren D.H."/>
            <person name="Hwang S.-I."/>
            <person name="Rezaul K."/>
            <person name="Wu L."/>
            <person name="Eng J.K."/>
            <person name="Rodionov V."/>
            <person name="Han D.K."/>
        </authorList>
    </citation>
    <scope>PHOSPHORYLATION [LARGE SCALE ANALYSIS] AT SER-38</scope>
    <scope>IDENTIFICATION BY MASS SPECTROMETRY [LARGE SCALE ANALYSIS]</scope>
    <source>
        <tissue>Leukemic T-cell</tissue>
    </source>
</reference>
<reference key="19">
    <citation type="journal article" date="2011" name="Ann. Neurol.">
        <title>TMEM43 mutations in Emery-Dreifuss muscular dystrophy-related myopathy.</title>
        <authorList>
            <person name="Liang W.C."/>
            <person name="Mitsuhashi H."/>
            <person name="Keduka E."/>
            <person name="Nonaka I."/>
            <person name="Noguchi S."/>
            <person name="Nishino I."/>
            <person name="Hayashi Y.K."/>
        </authorList>
    </citation>
    <scope>INTERACTION WITH TMEM43</scope>
</reference>
<reference key="20">
    <citation type="journal article" date="2011" name="BMC Syst. Biol.">
        <title>Initial characterization of the human central proteome.</title>
        <authorList>
            <person name="Burkard T.R."/>
            <person name="Planyavsky M."/>
            <person name="Kaupe I."/>
            <person name="Breitwieser F.P."/>
            <person name="Buerckstuemmer T."/>
            <person name="Bennett K.L."/>
            <person name="Superti-Furga G."/>
            <person name="Colinge J."/>
        </authorList>
    </citation>
    <scope>IDENTIFICATION BY MASS SPECTROMETRY [LARGE SCALE ANALYSIS]</scope>
</reference>
<reference key="21">
    <citation type="journal article" date="2013" name="J. Proteome Res.">
        <title>Toward a comprehensive characterization of a human cancer cell phosphoproteome.</title>
        <authorList>
            <person name="Zhou H."/>
            <person name="Di Palma S."/>
            <person name="Preisinger C."/>
            <person name="Peng M."/>
            <person name="Polat A.N."/>
            <person name="Heck A.J."/>
            <person name="Mohammed S."/>
        </authorList>
    </citation>
    <scope>PHOSPHORYLATION [LARGE SCALE ANALYSIS] AT SER-38</scope>
    <scope>IDENTIFICATION BY MASS SPECTROMETRY [LARGE SCALE ANALYSIS]</scope>
    <source>
        <tissue>Cervix carcinoma</tissue>
        <tissue>Erythroleukemia</tissue>
    </source>
</reference>
<reference key="22">
    <citation type="journal article" date="2014" name="J. Proteomics">
        <title>An enzyme assisted RP-RPLC approach for in-depth analysis of human liver phosphoproteome.</title>
        <authorList>
            <person name="Bian Y."/>
            <person name="Song C."/>
            <person name="Cheng K."/>
            <person name="Dong M."/>
            <person name="Wang F."/>
            <person name="Huang J."/>
            <person name="Sun D."/>
            <person name="Wang L."/>
            <person name="Ye M."/>
            <person name="Zou H."/>
        </authorList>
    </citation>
    <scope>PHOSPHORYLATION [LARGE SCALE ANALYSIS] AT SER-54</scope>
    <scope>IDENTIFICATION BY MASS SPECTROMETRY [LARGE SCALE ANALYSIS]</scope>
    <source>
        <tissue>Liver</tissue>
    </source>
</reference>
<reference key="23">
    <citation type="journal article" date="2015" name="Biophys. J.">
        <title>A disulfide bond is required for the transmission of forces through SUN-KASH complexes.</title>
        <authorList>
            <person name="Jahed Z."/>
            <person name="Shams H."/>
            <person name="Mofrad M.R."/>
        </authorList>
    </citation>
    <scope>SUBUNIT</scope>
    <scope>DISULFIDE BOND</scope>
    <scope>MUTAGENESIS OF CYS-563</scope>
</reference>
<reference key="24">
    <citation type="journal article" date="2022" name="J. Mol. Cell Biol.">
        <title>Inner nuclear membrane protein TMEM201 maintains endothelial cell migration and angiogenesis by interacting with the LINC complex.</title>
        <authorList>
            <person name="Zhang Y."/>
            <person name="Kong Y."/>
            <person name="Guo H."/>
            <person name="Liu Y."/>
            <person name="Zang Y."/>
            <person name="Li J."/>
        </authorList>
    </citation>
    <scope>INTERACTION WITH TMEM201</scope>
</reference>
<reference key="25">
    <citation type="journal article" date="2012" name="Cell">
        <title>LINC complexes form by binding of three KASH peptides to domain interfaces of trimeric SUN proteins.</title>
        <authorList>
            <person name="Sosa B.A."/>
            <person name="Rothballer A."/>
            <person name="Kutay U."/>
            <person name="Schwartz T.U."/>
        </authorList>
    </citation>
    <scope>X-RAY CRYSTALLOGRAPHY (2.22 ANGSTROMS) OF 522-717</scope>
    <scope>X-RAY CRYSTALLOGRAPHY (2.71 ANGSTROMS) OF 522-717 IN COMPLEX WITH SYNE2</scope>
    <scope>X-RAY CRYSTALLOGRAPHY (2.32 ANGSTROMS) OF 522-717 IN COMPLEX WITH SYNE1</scope>
    <scope>SUBUNIT</scope>
    <scope>MUTAGENESIS OF LEU-536; ARG-538; ASP-542; GLY-609; HIS-628; SER-641 AND TYR-707</scope>
</reference>
<reference key="26">
    <citation type="journal article" date="2012" name="Cell Res.">
        <title>Structural insights into SUN-KASH complexes across the nuclear envelope.</title>
        <authorList>
            <person name="Wang W."/>
            <person name="Shi Z."/>
            <person name="Jiao S."/>
            <person name="Chen C."/>
            <person name="Wang H."/>
            <person name="Liu G."/>
            <person name="Wang Q."/>
            <person name="Zhao Y."/>
            <person name="Greene M.I."/>
            <person name="Zhou Z."/>
        </authorList>
    </citation>
    <scope>X-RAY CRYSTALLOGRAPHY (3.05 ANGSTROMS) OF 523-717 IN COMPLEX WITH SYNE2</scope>
    <scope>FUNCTION</scope>
    <scope>MUTAGENESIS OF ALA-603; SER-641 AND TYR-703</scope>
</reference>
<reference key="27">
    <citation type="journal article" date="2012" name="J. Biol. Chem.">
        <title>Structure of Sad1-UNC84 homology (SUN) domain defines features of molecular bridge in nuclear envelope.</title>
        <authorList>
            <person name="Zhou Z."/>
            <person name="Du X."/>
            <person name="Cai Z."/>
            <person name="Song X."/>
            <person name="Zhang H."/>
            <person name="Mizuno T."/>
            <person name="Suzuki E."/>
            <person name="Yee M.R."/>
            <person name="Berezov A."/>
            <person name="Murali R."/>
            <person name="Wu S.L."/>
            <person name="Karger B.L."/>
            <person name="Greene M.I."/>
            <person name="Wang Q."/>
        </authorList>
    </citation>
    <scope>X-RAY CRYSTALLOGRAPHY (2.39 ANGSTROMS) OF 520-717</scope>
    <scope>SUBUNIT</scope>
</reference>
<dbReference type="EMBL" id="AB014568">
    <property type="protein sequence ID" value="BAA31643.1"/>
    <property type="status" value="ALT_INIT"/>
    <property type="molecule type" value="mRNA"/>
</dbReference>
<dbReference type="EMBL" id="AY682988">
    <property type="protein sequence ID" value="AAT90500.1"/>
    <property type="molecule type" value="mRNA"/>
</dbReference>
<dbReference type="EMBL" id="CR456474">
    <property type="protein sequence ID" value="CAG30360.1"/>
    <property type="molecule type" value="mRNA"/>
</dbReference>
<dbReference type="EMBL" id="BX537962">
    <property type="protein sequence ID" value="CAD97926.1"/>
    <property type="molecule type" value="mRNA"/>
</dbReference>
<dbReference type="EMBL" id="AL008583">
    <property type="status" value="NOT_ANNOTATED_CDS"/>
    <property type="molecule type" value="Genomic_DNA"/>
</dbReference>
<dbReference type="EMBL" id="AL021806">
    <property type="status" value="NOT_ANNOTATED_CDS"/>
    <property type="molecule type" value="Genomic_DNA"/>
</dbReference>
<dbReference type="EMBL" id="AL021707">
    <property type="status" value="NOT_ANNOTATED_CDS"/>
    <property type="molecule type" value="Genomic_DNA"/>
</dbReference>
<dbReference type="EMBL" id="BC030684">
    <property type="protein sequence ID" value="AAH30684.2"/>
    <property type="molecule type" value="mRNA"/>
</dbReference>
<dbReference type="EMBL" id="BC094797">
    <property type="protein sequence ID" value="AAH94797.1"/>
    <property type="molecule type" value="mRNA"/>
</dbReference>
<dbReference type="EMBL" id="BC111549">
    <property type="protein sequence ID" value="AAI11550.1"/>
    <property type="molecule type" value="mRNA"/>
</dbReference>
<dbReference type="EMBL" id="BC111717">
    <property type="protein sequence ID" value="AAI11718.1"/>
    <property type="molecule type" value="mRNA"/>
</dbReference>
<dbReference type="EMBL" id="AF202723">
    <property type="protein sequence ID" value="AAF15887.1"/>
    <property type="molecule type" value="mRNA"/>
</dbReference>
<dbReference type="CCDS" id="CCDS13978.1">
    <molecule id="Q9UH99-1"/>
</dbReference>
<dbReference type="CCDS" id="CCDS56231.1">
    <molecule id="Q9UH99-2"/>
</dbReference>
<dbReference type="PIR" id="T00371">
    <property type="entry name" value="T00371"/>
</dbReference>
<dbReference type="RefSeq" id="NP_001186508.1">
    <molecule id="Q9UH99-2"/>
    <property type="nucleotide sequence ID" value="NM_001199579.2"/>
</dbReference>
<dbReference type="RefSeq" id="NP_001186509.1">
    <molecule id="Q9UH99-1"/>
    <property type="nucleotide sequence ID" value="NM_001199580.2"/>
</dbReference>
<dbReference type="RefSeq" id="NP_001381357.1">
    <molecule id="Q9UH99-2"/>
    <property type="nucleotide sequence ID" value="NM_001394428.1"/>
</dbReference>
<dbReference type="RefSeq" id="NP_001381361.1">
    <molecule id="Q9UH99-1"/>
    <property type="nucleotide sequence ID" value="NM_001394432.1"/>
</dbReference>
<dbReference type="RefSeq" id="NP_001381362.1">
    <molecule id="Q9UH99-1"/>
    <property type="nucleotide sequence ID" value="NM_001394433.1"/>
</dbReference>
<dbReference type="RefSeq" id="NP_001381363.1">
    <molecule id="Q9UH99-1"/>
    <property type="nucleotide sequence ID" value="NM_001394434.1"/>
</dbReference>
<dbReference type="RefSeq" id="NP_001381364.1">
    <molecule id="Q9UH99-1"/>
    <property type="nucleotide sequence ID" value="NM_001394435.1"/>
</dbReference>
<dbReference type="RefSeq" id="NP_056189.1">
    <molecule id="Q9UH99-1"/>
    <property type="nucleotide sequence ID" value="NM_015374.3"/>
</dbReference>
<dbReference type="PDB" id="3UNP">
    <property type="method" value="X-ray"/>
    <property type="resolution" value="2.39 A"/>
    <property type="chains" value="A=520-717"/>
</dbReference>
<dbReference type="PDB" id="4DXR">
    <property type="method" value="X-ray"/>
    <property type="resolution" value="2.32 A"/>
    <property type="chains" value="A=522-717"/>
</dbReference>
<dbReference type="PDB" id="4DXS">
    <property type="method" value="X-ray"/>
    <property type="resolution" value="2.71 A"/>
    <property type="chains" value="A=522-717"/>
</dbReference>
<dbReference type="PDB" id="4DXT">
    <property type="method" value="X-ray"/>
    <property type="resolution" value="2.22 A"/>
    <property type="chains" value="A=522-717"/>
</dbReference>
<dbReference type="PDB" id="4FI9">
    <property type="method" value="X-ray"/>
    <property type="resolution" value="3.05 A"/>
    <property type="chains" value="A=523-717"/>
</dbReference>
<dbReference type="PDB" id="6WMD">
    <property type="method" value="X-ray"/>
    <property type="resolution" value="1.50 A"/>
    <property type="chains" value="A=522-717"/>
</dbReference>
<dbReference type="PDB" id="6WME">
    <property type="method" value="X-ray"/>
    <property type="resolution" value="1.53 A"/>
    <property type="chains" value="A=522-717"/>
</dbReference>
<dbReference type="PDB" id="6WMF">
    <property type="method" value="X-ray"/>
    <property type="resolution" value="2.60 A"/>
    <property type="chains" value="A=522-717"/>
</dbReference>
<dbReference type="PDB" id="6WMG">
    <property type="method" value="X-ray"/>
    <property type="resolution" value="1.90 A"/>
    <property type="chains" value="A=500-717"/>
</dbReference>
<dbReference type="PDBsum" id="3UNP"/>
<dbReference type="PDBsum" id="4DXR"/>
<dbReference type="PDBsum" id="4DXS"/>
<dbReference type="PDBsum" id="4DXT"/>
<dbReference type="PDBsum" id="4FI9"/>
<dbReference type="PDBsum" id="6WMD"/>
<dbReference type="PDBsum" id="6WME"/>
<dbReference type="PDBsum" id="6WMF"/>
<dbReference type="PDBsum" id="6WMG"/>
<dbReference type="SMR" id="Q9UH99"/>
<dbReference type="BioGRID" id="117312">
    <property type="interactions" value="259"/>
</dbReference>
<dbReference type="ComplexPortal" id="CPX-7666">
    <property type="entry name" value="LINC complex, SUN2-KASH5 variant"/>
</dbReference>
<dbReference type="ComplexPortal" id="CPX-7667">
    <property type="entry name" value="LINC complex, SUN2-SYNE1 variant"/>
</dbReference>
<dbReference type="ComplexPortal" id="CPX-7669">
    <property type="entry name" value="LINC complex, SUN2-SYNE2 variant"/>
</dbReference>
<dbReference type="ComplexPortal" id="CPX-7671">
    <property type="entry name" value="LINC complex, SUN2-SYNE3 variant"/>
</dbReference>
<dbReference type="ComplexPortal" id="CPX-7674">
    <property type="entry name" value="LINC complex, SUN2-SYNE4 variant"/>
</dbReference>
<dbReference type="ComplexPortal" id="CPX-9541">
    <property type="entry name" value="LINC complex, SUN2-KASH6 complex"/>
</dbReference>
<dbReference type="FunCoup" id="Q9UH99">
    <property type="interactions" value="981"/>
</dbReference>
<dbReference type="IntAct" id="Q9UH99">
    <property type="interactions" value="176"/>
</dbReference>
<dbReference type="MINT" id="Q9UH99"/>
<dbReference type="STRING" id="9606.ENSP00000385616"/>
<dbReference type="TCDB" id="1.I.1.1.3">
    <property type="family name" value="the nuclear pore complex (npc) family"/>
</dbReference>
<dbReference type="GlyConnect" id="1777">
    <property type="glycosylation" value="6 N-Linked glycans (1 site)"/>
</dbReference>
<dbReference type="GlyCosmos" id="Q9UH99">
    <property type="glycosylation" value="3 sites, 6 glycans"/>
</dbReference>
<dbReference type="GlyGen" id="Q9UH99">
    <property type="glycosylation" value="6 sites, 13 N-linked glycans (1 site), 2 O-linked glycans (5 sites)"/>
</dbReference>
<dbReference type="iPTMnet" id="Q9UH99"/>
<dbReference type="PhosphoSitePlus" id="Q9UH99"/>
<dbReference type="SwissPalm" id="Q9UH99"/>
<dbReference type="BioMuta" id="SUN2"/>
<dbReference type="DMDM" id="29337242"/>
<dbReference type="jPOST" id="Q9UH99"/>
<dbReference type="MassIVE" id="Q9UH99"/>
<dbReference type="PaxDb" id="9606-ENSP00000385616"/>
<dbReference type="PeptideAtlas" id="Q9UH99"/>
<dbReference type="ProteomicsDB" id="2587"/>
<dbReference type="ProteomicsDB" id="84289">
    <molecule id="Q9UH99-1"/>
</dbReference>
<dbReference type="Pumba" id="Q9UH99"/>
<dbReference type="Antibodypedia" id="228">
    <property type="antibodies" value="198 antibodies from 27 providers"/>
</dbReference>
<dbReference type="DNASU" id="25777"/>
<dbReference type="Ensembl" id="ENST00000405018.5">
    <molecule id="Q9UH99-2"/>
    <property type="protein sequence ID" value="ENSP00000385616.1"/>
    <property type="gene ID" value="ENSG00000100242.16"/>
</dbReference>
<dbReference type="Ensembl" id="ENST00000405510.5">
    <molecule id="Q9UH99-1"/>
    <property type="protein sequence ID" value="ENSP00000385740.1"/>
    <property type="gene ID" value="ENSG00000100242.16"/>
</dbReference>
<dbReference type="Ensembl" id="ENST00000406622.5">
    <molecule id="Q9UH99-1"/>
    <property type="protein sequence ID" value="ENSP00000383992.1"/>
    <property type="gene ID" value="ENSG00000100242.16"/>
</dbReference>
<dbReference type="Ensembl" id="ENST00000689035.1">
    <molecule id="Q9UH99-1"/>
    <property type="protein sequence ID" value="ENSP00000508608.1"/>
    <property type="gene ID" value="ENSG00000100242.16"/>
</dbReference>
<dbReference type="GeneID" id="25777"/>
<dbReference type="KEGG" id="hsa:25777"/>
<dbReference type="MANE-Select" id="ENST00000689035.1">
    <property type="protein sequence ID" value="ENSP00000508608.1"/>
    <property type="RefSeq nucleotide sequence ID" value="NM_015374.3"/>
    <property type="RefSeq protein sequence ID" value="NP_056189.1"/>
</dbReference>
<dbReference type="UCSC" id="uc003awh.3">
    <molecule id="Q9UH99-1"/>
    <property type="organism name" value="human"/>
</dbReference>
<dbReference type="AGR" id="HGNC:14210"/>
<dbReference type="CTD" id="25777"/>
<dbReference type="DisGeNET" id="25777"/>
<dbReference type="GeneCards" id="SUN2"/>
<dbReference type="HGNC" id="HGNC:14210">
    <property type="gene designation" value="SUN2"/>
</dbReference>
<dbReference type="HPA" id="ENSG00000100242">
    <property type="expression patterns" value="Low tissue specificity"/>
</dbReference>
<dbReference type="MalaCards" id="SUN2"/>
<dbReference type="MIM" id="613569">
    <property type="type" value="gene"/>
</dbReference>
<dbReference type="neXtProt" id="NX_Q9UH99"/>
<dbReference type="OpenTargets" id="ENSG00000100242"/>
<dbReference type="PharmGKB" id="PA165378369"/>
<dbReference type="VEuPathDB" id="HostDB:ENSG00000100242"/>
<dbReference type="eggNOG" id="KOG2687">
    <property type="taxonomic scope" value="Eukaryota"/>
</dbReference>
<dbReference type="GeneTree" id="ENSGT00940000160024"/>
<dbReference type="HOGENOM" id="CLU_012938_1_0_1"/>
<dbReference type="InParanoid" id="Q9UH99"/>
<dbReference type="OMA" id="WAASCFW"/>
<dbReference type="OrthoDB" id="342281at2759"/>
<dbReference type="PAN-GO" id="Q9UH99">
    <property type="GO annotations" value="4 GO annotations based on evolutionary models"/>
</dbReference>
<dbReference type="PhylomeDB" id="Q9UH99"/>
<dbReference type="TreeFam" id="TF323915"/>
<dbReference type="PathwayCommons" id="Q9UH99"/>
<dbReference type="Reactome" id="R-HSA-1221632">
    <property type="pathway name" value="Meiotic synapsis"/>
</dbReference>
<dbReference type="SignaLink" id="Q9UH99"/>
<dbReference type="SIGNOR" id="Q9UH99"/>
<dbReference type="BioGRID-ORCS" id="25777">
    <property type="hits" value="20 hits in 1171 CRISPR screens"/>
</dbReference>
<dbReference type="CD-CODE" id="DEE660B4">
    <property type="entry name" value="Stress granule"/>
</dbReference>
<dbReference type="ChiTaRS" id="SUN2">
    <property type="organism name" value="human"/>
</dbReference>
<dbReference type="EvolutionaryTrace" id="Q9UH99"/>
<dbReference type="GeneWiki" id="UNC84B"/>
<dbReference type="GenomeRNAi" id="25777"/>
<dbReference type="Pharos" id="Q9UH99">
    <property type="development level" value="Tbio"/>
</dbReference>
<dbReference type="PRO" id="PR:Q9UH99"/>
<dbReference type="Proteomes" id="UP000005640">
    <property type="component" value="Chromosome 22"/>
</dbReference>
<dbReference type="RNAct" id="Q9UH99">
    <property type="molecule type" value="protein"/>
</dbReference>
<dbReference type="Bgee" id="ENSG00000100242">
    <property type="expression patterns" value="Expressed in granulocyte and 202 other cell types or tissues"/>
</dbReference>
<dbReference type="ExpressionAtlas" id="Q9UH99">
    <property type="expression patterns" value="baseline and differential"/>
</dbReference>
<dbReference type="GO" id="GO:0000781">
    <property type="term" value="C:chromosome, telomeric region"/>
    <property type="evidence" value="ECO:0007669"/>
    <property type="project" value="Ensembl"/>
</dbReference>
<dbReference type="GO" id="GO:0000794">
    <property type="term" value="C:condensed nuclear chromosome"/>
    <property type="evidence" value="ECO:0007669"/>
    <property type="project" value="Ensembl"/>
</dbReference>
<dbReference type="GO" id="GO:0010008">
    <property type="term" value="C:endosome membrane"/>
    <property type="evidence" value="ECO:0007669"/>
    <property type="project" value="UniProtKB-SubCell"/>
</dbReference>
<dbReference type="GO" id="GO:0034993">
    <property type="term" value="C:meiotic nuclear membrane microtubule tethering complex"/>
    <property type="evidence" value="ECO:0000314"/>
    <property type="project" value="UniProtKB"/>
</dbReference>
<dbReference type="GO" id="GO:0005635">
    <property type="term" value="C:nuclear envelope"/>
    <property type="evidence" value="ECO:0000314"/>
    <property type="project" value="UniProtKB"/>
</dbReference>
<dbReference type="GO" id="GO:0005637">
    <property type="term" value="C:nuclear inner membrane"/>
    <property type="evidence" value="ECO:0007669"/>
    <property type="project" value="UniProtKB-SubCell"/>
</dbReference>
<dbReference type="GO" id="GO:0031965">
    <property type="term" value="C:nuclear membrane"/>
    <property type="evidence" value="ECO:0000314"/>
    <property type="project" value="HPA"/>
</dbReference>
<dbReference type="GO" id="GO:0140444">
    <property type="term" value="F:cytoskeleton-nuclear membrane anchor activity"/>
    <property type="evidence" value="ECO:0000314"/>
    <property type="project" value="GO_Central"/>
</dbReference>
<dbReference type="GO" id="GO:0042802">
    <property type="term" value="F:identical protein binding"/>
    <property type="evidence" value="ECO:0000353"/>
    <property type="project" value="IntAct"/>
</dbReference>
<dbReference type="GO" id="GO:0005521">
    <property type="term" value="F:lamin binding"/>
    <property type="evidence" value="ECO:0000314"/>
    <property type="project" value="UniProtKB"/>
</dbReference>
<dbReference type="GO" id="GO:0008017">
    <property type="term" value="F:microtubule binding"/>
    <property type="evidence" value="ECO:0000304"/>
    <property type="project" value="UniProtKB"/>
</dbReference>
<dbReference type="GO" id="GO:0043495">
    <property type="term" value="F:protein-membrane adaptor activity"/>
    <property type="evidence" value="ECO:0000318"/>
    <property type="project" value="GO_Central"/>
</dbReference>
<dbReference type="GO" id="GO:0051642">
    <property type="term" value="P:centrosome localization"/>
    <property type="evidence" value="ECO:0000250"/>
    <property type="project" value="UniProtKB"/>
</dbReference>
<dbReference type="GO" id="GO:0051321">
    <property type="term" value="P:meiotic cell cycle"/>
    <property type="evidence" value="ECO:0007669"/>
    <property type="project" value="UniProtKB-KW"/>
</dbReference>
<dbReference type="GO" id="GO:0007052">
    <property type="term" value="P:mitotic spindle organization"/>
    <property type="evidence" value="ECO:0000304"/>
    <property type="project" value="UniProtKB"/>
</dbReference>
<dbReference type="GO" id="GO:0090292">
    <property type="term" value="P:nuclear matrix anchoring at nuclear membrane"/>
    <property type="evidence" value="ECO:0000314"/>
    <property type="project" value="UniProtKB"/>
</dbReference>
<dbReference type="GO" id="GO:0007097">
    <property type="term" value="P:nuclear migration"/>
    <property type="evidence" value="ECO:0000304"/>
    <property type="project" value="UniProtKB"/>
</dbReference>
<dbReference type="GO" id="GO:0031022">
    <property type="term" value="P:nuclear migration along microfilament"/>
    <property type="evidence" value="ECO:0000250"/>
    <property type="project" value="UniProtKB"/>
</dbReference>
<dbReference type="GO" id="GO:0021817">
    <property type="term" value="P:nucleokinesis involved in cell motility in cerebral cortex radial glia guided migration"/>
    <property type="evidence" value="ECO:0007669"/>
    <property type="project" value="Ensembl"/>
</dbReference>
<dbReference type="GO" id="GO:0030335">
    <property type="term" value="P:positive regulation of cell migration"/>
    <property type="evidence" value="ECO:0000250"/>
    <property type="project" value="UniProtKB"/>
</dbReference>
<dbReference type="CDD" id="cd21438">
    <property type="entry name" value="SUN2_cc1"/>
    <property type="match status" value="1"/>
</dbReference>
<dbReference type="FunFam" id="2.60.120.260:FF:000009">
    <property type="entry name" value="SUN domain-containing protein 1 isoform X1"/>
    <property type="match status" value="1"/>
</dbReference>
<dbReference type="Gene3D" id="2.60.120.260">
    <property type="entry name" value="Galactose-binding domain-like"/>
    <property type="match status" value="1"/>
</dbReference>
<dbReference type="InterPro" id="IPR045119">
    <property type="entry name" value="SUN1-5"/>
</dbReference>
<dbReference type="InterPro" id="IPR040994">
    <property type="entry name" value="Sun_CC2"/>
</dbReference>
<dbReference type="InterPro" id="IPR012919">
    <property type="entry name" value="SUN_dom"/>
</dbReference>
<dbReference type="PANTHER" id="PTHR12911">
    <property type="entry name" value="SAD1/UNC-84-LIKE PROTEIN-RELATED"/>
    <property type="match status" value="1"/>
</dbReference>
<dbReference type="PANTHER" id="PTHR12911:SF22">
    <property type="entry name" value="SUN DOMAIN-CONTAINING PROTEIN 2"/>
    <property type="match status" value="1"/>
</dbReference>
<dbReference type="Pfam" id="PF18580">
    <property type="entry name" value="HTH_SUN2"/>
    <property type="match status" value="1"/>
</dbReference>
<dbReference type="Pfam" id="PF07738">
    <property type="entry name" value="Sad1_UNC"/>
    <property type="match status" value="1"/>
</dbReference>
<dbReference type="PROSITE" id="PS51469">
    <property type="entry name" value="SUN"/>
    <property type="match status" value="1"/>
</dbReference>
<keyword id="KW-0002">3D-structure</keyword>
<keyword id="KW-0025">Alternative splicing</keyword>
<keyword id="KW-0175">Coiled coil</keyword>
<keyword id="KW-1015">Disulfide bond</keyword>
<keyword id="KW-0967">Endosome</keyword>
<keyword id="KW-0325">Glycoprotein</keyword>
<keyword id="KW-0469">Meiosis</keyword>
<keyword id="KW-0472">Membrane</keyword>
<keyword id="KW-0539">Nucleus</keyword>
<keyword id="KW-0597">Phosphoprotein</keyword>
<keyword id="KW-1267">Proteomics identification</keyword>
<keyword id="KW-1185">Reference proteome</keyword>
<keyword id="KW-0735">Signal-anchor</keyword>
<keyword id="KW-0812">Transmembrane</keyword>
<keyword id="KW-1133">Transmembrane helix</keyword>
<feature type="chain" id="PRO_0000218913" description="SUN domain-containing protein 2">
    <location>
        <begin position="1"/>
        <end position="717"/>
    </location>
</feature>
<feature type="topological domain" description="Nuclear" evidence="9">
    <location>
        <begin position="1"/>
        <end position="212"/>
    </location>
</feature>
<feature type="transmembrane region" description="Helical">
    <location>
        <begin position="213"/>
        <end position="233"/>
    </location>
</feature>
<feature type="topological domain" description="Perinuclear space" evidence="9">
    <location>
        <begin position="234"/>
        <end position="717"/>
    </location>
</feature>
<feature type="domain" description="SUN" evidence="4">
    <location>
        <begin position="555"/>
        <end position="716"/>
    </location>
</feature>
<feature type="region of interest" description="LMNA-binding" evidence="1">
    <location>
        <begin position="1"/>
        <end position="139"/>
    </location>
</feature>
<feature type="region of interest" description="Disordered" evidence="5">
    <location>
        <begin position="1"/>
        <end position="66"/>
    </location>
</feature>
<feature type="region of interest" description="Sufficient for interaction with SYNE1 and SYNE2" evidence="18">
    <location>
        <begin position="507"/>
        <end position="717"/>
    </location>
</feature>
<feature type="coiled-coil region" evidence="3">
    <location>
        <begin position="273"/>
        <end position="296"/>
    </location>
</feature>
<feature type="coiled-coil region" evidence="3">
    <location>
        <begin position="348"/>
        <end position="440"/>
    </location>
</feature>
<feature type="coiled-coil region" evidence="3">
    <location>
        <begin position="475"/>
        <end position="506"/>
    </location>
</feature>
<feature type="compositionally biased region" description="Low complexity" evidence="5">
    <location>
        <begin position="19"/>
        <end position="32"/>
    </location>
</feature>
<feature type="modified residue" description="Phosphoserine" evidence="7">
    <location>
        <position position="12"/>
    </location>
</feature>
<feature type="modified residue" description="Phosphoserine" evidence="27 28">
    <location>
        <position position="38"/>
    </location>
</feature>
<feature type="modified residue" description="Phosphoserine" evidence="7 26 29">
    <location>
        <position position="54"/>
    </location>
</feature>
<feature type="modified residue" description="Phosphothreonine" evidence="2">
    <location>
        <position position="107"/>
    </location>
</feature>
<feature type="modified residue" description="Phosphoserine" evidence="2">
    <location>
        <position position="110"/>
    </location>
</feature>
<feature type="modified residue" description="Phosphoserine" evidence="2">
    <location>
        <position position="113"/>
    </location>
</feature>
<feature type="modified residue" description="Phosphoserine" evidence="7">
    <location>
        <position position="116"/>
    </location>
</feature>
<feature type="modified residue" description="Phosphoserine" evidence="2">
    <location>
        <position position="136"/>
    </location>
</feature>
<feature type="glycosylation site" description="N-linked (GlcNAc...) asparagine" evidence="15">
    <location>
        <position position="636"/>
    </location>
</feature>
<feature type="disulfide bond" description="Interchain (with C-6862 in SYNE2)" evidence="18">
    <location>
        <position position="563"/>
    </location>
</feature>
<feature type="disulfide bond" evidence="18 19">
    <location>
        <begin position="601"/>
        <end position="705"/>
    </location>
</feature>
<feature type="splice variant" id="VSP_045882" description="In isoform 2." evidence="22">
    <original>V</original>
    <variation>VEDSEGRGSKVTETEPVSSFPA</variation>
    <location>
        <position position="141"/>
    </location>
</feature>
<feature type="splice variant" id="VSP_053702" description="In isoform 3." evidence="22">
    <original>TMATYQVVELRILTNWGHPEYTCIYRFRVHGEPAH</original>
    <variation>SSFPLCPWRLLPILGVCIYVAYHGGLGSWER</variation>
    <location>
        <begin position="683"/>
        <end position="717"/>
    </location>
</feature>
<feature type="sequence variant" id="VAR_052282" description="In dbSNP:rs2072799.">
    <original>T</original>
    <variation>A</variation>
    <location>
        <position position="33"/>
    </location>
</feature>
<feature type="sequence variant" id="VAR_052283" description="In dbSNP:rs35496634." evidence="10">
    <original>L</original>
    <variation>R</variation>
    <location>
        <position position="89"/>
    </location>
</feature>
<feature type="sequence variant" id="VAR_052284" description="In dbSNP:rs138708.">
    <original>R</original>
    <variation>C</variation>
    <location>
        <position position="348"/>
    </location>
</feature>
<feature type="sequence variant" id="VAR_024624" description="In dbSNP:rs2072797." evidence="10">
    <original>G</original>
    <variation>S</variation>
    <location>
        <position position="671"/>
    </location>
</feature>
<feature type="mutagenesis site" description="Disrupts interaction with SYNE2." evidence="18">
    <original>L</original>
    <variation>D</variation>
    <location>
        <position position="536"/>
    </location>
</feature>
<feature type="mutagenesis site" description="Disrupts interaction with SYNE2." evidence="18">
    <location>
        <position position="538"/>
    </location>
</feature>
<feature type="mutagenesis site" description="Disrupts interaction with SYNE2." evidence="17 18">
    <original>D</original>
    <variation>N</variation>
    <location>
        <position position="542"/>
    </location>
</feature>
<feature type="mutagenesis site" description="Decreases stability of the SUN2:SYNE2/KASH2 complex under tensile forces and inhibits force transmission through the complex." evidence="20">
    <original>C</original>
    <variation>A</variation>
    <location>
        <position position="563"/>
    </location>
</feature>
<feature type="mutagenesis site" description="Decreases interaction with SYNE2. Disrupts interaction with SYNE2; when associated with E-641 and E-703." evidence="19">
    <original>A</original>
    <variation>E</variation>
    <location>
        <position position="603"/>
    </location>
</feature>
<feature type="mutagenesis site" description="Decreases interaction with SYNE2." evidence="17">
    <original>G</original>
    <variation>D</variation>
    <location>
        <position position="609"/>
    </location>
</feature>
<feature type="mutagenesis site" description="Disrupts interaction with SYNE2." evidence="18">
    <original>H</original>
    <variation>A</variation>
    <location>
        <position position="628"/>
    </location>
</feature>
<feature type="mutagenesis site" description="Decreases interaction with SYNE2. Disrupts interaction with SYNE2; when associated with E-603 and E-703." evidence="18 19">
    <original>S</original>
    <variation>E</variation>
    <location>
        <position position="641"/>
    </location>
</feature>
<feature type="mutagenesis site" description="Decreases interaction with SYNE2. Disrupts interaction with SYNE2; when associated with E-603 and E-641." evidence="19">
    <original>Y</original>
    <variation>E</variation>
    <location>
        <position position="703"/>
    </location>
</feature>
<feature type="mutagenesis site" description="Disrupts interaction with SYNE2, impairs localization to the nuclear envelope." evidence="18">
    <original>Y</original>
    <variation>F</variation>
    <location>
        <position position="707"/>
    </location>
</feature>
<feature type="sequence conflict" description="In Ref. 5; CAD97926." evidence="23" ref="5">
    <original>K</original>
    <variation>R</variation>
    <location>
        <position position="644"/>
    </location>
</feature>
<feature type="helix" evidence="31">
    <location>
        <begin position="525"/>
        <end position="540"/>
    </location>
</feature>
<feature type="turn" evidence="31">
    <location>
        <begin position="541"/>
        <end position="544"/>
    </location>
</feature>
<feature type="helix" evidence="31">
    <location>
        <begin position="552"/>
        <end position="554"/>
    </location>
</feature>
<feature type="helix" evidence="31">
    <location>
        <begin position="560"/>
        <end position="562"/>
    </location>
</feature>
<feature type="strand" evidence="31">
    <location>
        <begin position="572"/>
        <end position="576"/>
    </location>
</feature>
<feature type="strand" evidence="31">
    <location>
        <begin position="579"/>
        <end position="583"/>
    </location>
</feature>
<feature type="helix" evidence="31">
    <location>
        <begin position="588"/>
        <end position="592"/>
    </location>
</feature>
<feature type="strand" evidence="31">
    <location>
        <begin position="601"/>
        <end position="607"/>
    </location>
</feature>
<feature type="strand" evidence="31">
    <location>
        <begin position="609"/>
        <end position="627"/>
    </location>
</feature>
<feature type="helix" evidence="31">
    <location>
        <begin position="631"/>
        <end position="633"/>
    </location>
</feature>
<feature type="helix" evidence="31">
    <location>
        <begin position="635"/>
        <end position="637"/>
    </location>
</feature>
<feature type="strand" evidence="31">
    <location>
        <begin position="645"/>
        <end position="655"/>
    </location>
</feature>
<feature type="strand" evidence="31">
    <location>
        <begin position="660"/>
        <end position="666"/>
    </location>
</feature>
<feature type="strand" evidence="30">
    <location>
        <begin position="669"/>
        <end position="671"/>
    </location>
</feature>
<feature type="strand" evidence="31">
    <location>
        <begin position="673"/>
        <end position="678"/>
    </location>
</feature>
<feature type="strand" evidence="31">
    <location>
        <begin position="687"/>
        <end position="694"/>
    </location>
</feature>
<feature type="strand" evidence="31">
    <location>
        <begin position="697"/>
        <end position="699"/>
    </location>
</feature>
<feature type="strand" evidence="31">
    <location>
        <begin position="701"/>
        <end position="706"/>
    </location>
</feature>
<feature type="strand" evidence="31">
    <location>
        <begin position="708"/>
        <end position="715"/>
    </location>
</feature>
<accession>Q9UH99</accession>
<accession>B0QY62</accession>
<accession>O75156</accession>
<accession>Q2NKN8</accession>
<accession>Q2T9F7</accession>
<accession>Q504T5</accession>
<accession>Q6B4H1</accession>
<accession>Q7Z3E3</accession>
<gene>
    <name evidence="25" type="primary">SUN2</name>
    <name type="synonym">FRIGG</name>
    <name type="synonym">KIAA0668</name>
    <name type="synonym">RAB5IP</name>
    <name type="synonym">UNC84B</name>
</gene>
<name>SUN2_HUMAN</name>
<evidence type="ECO:0000250" key="1"/>
<evidence type="ECO:0000250" key="2">
    <source>
        <dbReference type="UniProtKB" id="Q8BJS4"/>
    </source>
</evidence>
<evidence type="ECO:0000255" key="3"/>
<evidence type="ECO:0000255" key="4">
    <source>
        <dbReference type="PROSITE-ProRule" id="PRU00802"/>
    </source>
</evidence>
<evidence type="ECO:0000256" key="5">
    <source>
        <dbReference type="SAM" id="MobiDB-lite"/>
    </source>
</evidence>
<evidence type="ECO:0000269" key="6">
    <source>
    </source>
</evidence>
<evidence type="ECO:0000269" key="7">
    <source>
    </source>
</evidence>
<evidence type="ECO:0000269" key="8">
    <source>
    </source>
</evidence>
<evidence type="ECO:0000269" key="9">
    <source>
    </source>
</evidence>
<evidence type="ECO:0000269" key="10">
    <source>
    </source>
</evidence>
<evidence type="ECO:0000269" key="11">
    <source>
    </source>
</evidence>
<evidence type="ECO:0000269" key="12">
    <source>
    </source>
</evidence>
<evidence type="ECO:0000269" key="13">
    <source>
    </source>
</evidence>
<evidence type="ECO:0000269" key="14">
    <source>
    </source>
</evidence>
<evidence type="ECO:0000269" key="15">
    <source>
    </source>
</evidence>
<evidence type="ECO:0000269" key="16">
    <source>
    </source>
</evidence>
<evidence type="ECO:0000269" key="17">
    <source>
    </source>
</evidence>
<evidence type="ECO:0000269" key="18">
    <source>
    </source>
</evidence>
<evidence type="ECO:0000269" key="19">
    <source>
    </source>
</evidence>
<evidence type="ECO:0000269" key="20">
    <source>
    </source>
</evidence>
<evidence type="ECO:0000269" key="21">
    <source>
    </source>
</evidence>
<evidence type="ECO:0000303" key="22">
    <source>
    </source>
</evidence>
<evidence type="ECO:0000305" key="23"/>
<evidence type="ECO:0000305" key="24">
    <source>
    </source>
</evidence>
<evidence type="ECO:0000312" key="25">
    <source>
        <dbReference type="HGNC" id="HGNC:14210"/>
    </source>
</evidence>
<evidence type="ECO:0007744" key="26">
    <source>
    </source>
</evidence>
<evidence type="ECO:0007744" key="27">
    <source>
    </source>
</evidence>
<evidence type="ECO:0007744" key="28">
    <source>
    </source>
</evidence>
<evidence type="ECO:0007744" key="29">
    <source>
    </source>
</evidence>
<evidence type="ECO:0007829" key="30">
    <source>
        <dbReference type="PDB" id="3UNP"/>
    </source>
</evidence>
<evidence type="ECO:0007829" key="31">
    <source>
        <dbReference type="PDB" id="6WMD"/>
    </source>
</evidence>
<organism>
    <name type="scientific">Homo sapiens</name>
    <name type="common">Human</name>
    <dbReference type="NCBI Taxonomy" id="9606"/>
    <lineage>
        <taxon>Eukaryota</taxon>
        <taxon>Metazoa</taxon>
        <taxon>Chordata</taxon>
        <taxon>Craniata</taxon>
        <taxon>Vertebrata</taxon>
        <taxon>Euteleostomi</taxon>
        <taxon>Mammalia</taxon>
        <taxon>Eutheria</taxon>
        <taxon>Euarchontoglires</taxon>
        <taxon>Primates</taxon>
        <taxon>Haplorrhini</taxon>
        <taxon>Catarrhini</taxon>
        <taxon>Hominidae</taxon>
        <taxon>Homo</taxon>
    </lineage>
</organism>
<proteinExistence type="evidence at protein level"/>
<comment type="function">
    <text evidence="2 13 23">As a component of the LINC (LInker of Nucleoskeleton and Cytoskeleton) complex, involved in the connection between the nuclear lamina and the cytoskeleton. The nucleocytoplasmic interactions established by the LINC complex play an important role in the transmission of mechanical forces across the nuclear envelope and in nuclear movement and positioning. Specifically, SYNE2 and SUN2 assemble in arrays of transmembrane actin-associated nuclear (TAN) lines which are bound to F-actin cables and couple the nucleus to retrograde actin flow during actin-dependent nuclear movement. Required for interkinetic nuclear migration (INM) and essential for nucleokinesis and centrosome-nucleus coupling during radial neuronal migration in the cerebral cortex and during glial migration. Required for nuclear migration in retinal photoreceptor progenitors implicating association with cytoplasmic dynein-dynactin and kinesin motor complexes, and probably B-type lamins; SUN1 and SUN2 seem to act redundantly. The SUN1/2:KASH5 LINC complex couples telomeres to microtubules during meiosis; SUN1 and SUN2 seem to act at least partial redundantly. Anchors chromosome movement in the prophase of meiosis and is involved in selective gene expression of coding and non-coding RNAs needed for gametogenesis. Required for telomere attachment to nuclear envelope and gametogenesis. May also function on endocytic vesicles as a receptor for RAB5-GDP and participate in the activation of RAB5.</text>
</comment>
<comment type="subunit">
    <text evidence="2 6 11 13 14 16 18 19 21">Core component of the LINC complex which is composed of inner nuclear membrane SUN domain-containing proteins coupled to outer nuclear membrane KASH domain-containing nesprins. SUN and KASH domain-containing proteins seem to bind each other promiscuously; however, differentially expression of LINC complex constituents is giving rise to specific assemblies. At least SUN1/2-containing core LINC complexes are proposed to be hexameric composed of three protomers of each KASH and SUN domain-containing protein. Interacts with SYNE2; the SUN2:SYNE2/KASH2 LINC complex is a heterohexamer; the homotrimeric cloverleave-like conformation of the SUN domain is a prerequisite for LINC complex formation in which three separate SYNE2/KASH2 peptides bind at the interface of adjacent SUN domains. Component of a probable SUN2:KASH5 LINC complex. Interacts with SYNE1 and SYNE3; probably forming respective LINC complexes. Interacts with A-type lamin. Interaction with lamins B1 and C is hardly detectable (By similarity). Interacts with EMD and RAB5A. Interacts with TMEM43 (PubMed:21391237). Interacts with TMEM201 (PubMed:35311970).</text>
</comment>
<comment type="interaction">
    <interactant intactId="EBI-1044964">
        <id>Q9UH99</id>
    </interactant>
    <interactant intactId="EBI-359063">
        <id>P53618</id>
        <label>COPB1</label>
    </interactant>
    <organismsDiffer>false</organismsDiffer>
    <experiments>3</experiments>
</comment>
<comment type="interaction">
    <interactant intactId="EBI-1044964">
        <id>Q9UH99</id>
    </interactant>
    <interactant intactId="EBI-489887">
        <id>P50402</id>
        <label>EMD</label>
    </interactant>
    <organismsDiffer>false</organismsDiffer>
    <experiments>4</experiments>
</comment>
<comment type="interaction">
    <interactant intactId="EBI-1044964">
        <id>Q9UH99</id>
    </interactant>
    <interactant intactId="EBI-749265">
        <id>Q8N6L0</id>
        <label>KASH5</label>
    </interactant>
    <organismsDiffer>false</organismsDiffer>
    <experiments>3</experiments>
</comment>
<comment type="interaction">
    <interactant intactId="EBI-1044964">
        <id>Q9UH99</id>
    </interactant>
    <interactant intactId="EBI-349938">
        <id>P52292</id>
        <label>KPNA2</label>
    </interactant>
    <organismsDiffer>false</organismsDiffer>
    <experiments>3</experiments>
</comment>
<comment type="interaction">
    <interactant intactId="EBI-1044964">
        <id>Q9UH99</id>
    </interactant>
    <interactant intactId="EBI-351935">
        <id>P02545</id>
        <label>LMNA</label>
    </interactant>
    <organismsDiffer>false</organismsDiffer>
    <experiments>5</experiments>
</comment>
<comment type="interaction">
    <interactant intactId="EBI-1044964">
        <id>Q9UH99</id>
    </interactant>
    <interactant intactId="EBI-10262547">
        <id>Q8IXM6</id>
        <label>NRM</label>
    </interactant>
    <organismsDiffer>false</organismsDiffer>
    <experiments>3</experiments>
</comment>
<comment type="interaction">
    <interactant intactId="EBI-1044964">
        <id>Q9UH99</id>
    </interactant>
    <interactant intactId="EBI-399437">
        <id>P20339</id>
        <label>RAB5A</label>
    </interactant>
    <organismsDiffer>false</organismsDiffer>
    <experiments>6</experiments>
</comment>
<comment type="interaction">
    <interactant intactId="EBI-1044964">
        <id>Q9UH99</id>
    </interactant>
    <interactant intactId="EBI-1044964">
        <id>Q9UH99</id>
        <label>SUN2</label>
    </interactant>
    <organismsDiffer>false</organismsDiffer>
    <experiments>3</experiments>
</comment>
<comment type="interaction">
    <interactant intactId="EBI-1044964">
        <id>Q9UH99</id>
    </interactant>
    <interactant intactId="EBI-928867">
        <id>Q8NF91</id>
        <label>SYNE1</label>
    </interactant>
    <organismsDiffer>false</organismsDiffer>
    <experiments>7</experiments>
</comment>
<comment type="interaction">
    <interactant intactId="EBI-1044964">
        <id>Q9UH99</id>
    </interactant>
    <interactant intactId="EBI-6170938">
        <id>Q8NF91-1</id>
        <label>SYNE1</label>
    </interactant>
    <organismsDiffer>false</organismsDiffer>
    <experiments>2</experiments>
</comment>
<comment type="interaction">
    <interactant intactId="EBI-1044964">
        <id>Q9UH99</id>
    </interactant>
    <interactant intactId="EBI-2372294">
        <id>Q8WXH0</id>
        <label>SYNE2</label>
    </interactant>
    <organismsDiffer>false</organismsDiffer>
    <experiments>11</experiments>
</comment>
<comment type="interaction">
    <interactant intactId="EBI-1044964">
        <id>Q9UH99</id>
    </interactant>
    <interactant intactId="EBI-6170976">
        <id>Q8WXH0-1</id>
        <label>SYNE2</label>
    </interactant>
    <organismsDiffer>false</organismsDiffer>
    <experiments>2</experiments>
</comment>
<comment type="interaction">
    <interactant intactId="EBI-1044964">
        <id>Q9UH99</id>
    </interactant>
    <interactant intactId="EBI-10760872">
        <id>Q6ZMZ3</id>
        <label>SYNE3</label>
    </interactant>
    <organismsDiffer>false</organismsDiffer>
    <experiments>2</experiments>
</comment>
<comment type="interaction">
    <interactant intactId="EBI-1044964">
        <id>Q9UH99</id>
    </interactant>
    <interactant intactId="EBI-7131783">
        <id>Q8N205</id>
        <label>SYNE4</label>
    </interactant>
    <organismsDiffer>false</organismsDiffer>
    <experiments>4</experiments>
</comment>
<comment type="interaction">
    <interactant intactId="EBI-1044964">
        <id>Q9UH99</id>
    </interactant>
    <interactant intactId="EBI-25475894">
        <id>P0DTC3</id>
        <label>3a</label>
    </interactant>
    <organismsDiffer>true</organismsDiffer>
    <experiments>3</experiments>
</comment>
<comment type="subcellular location">
    <subcellularLocation>
        <location evidence="9">Nucleus inner membrane</location>
        <topology evidence="9">Single-pass type II membrane protein</topology>
    </subcellularLocation>
    <subcellularLocation>
        <location evidence="9 11 12">Nucleus envelope</location>
    </subcellularLocation>
    <subcellularLocation>
        <location evidence="6">Endosome membrane</location>
        <topology evidence="23">Single-pass type II membrane protein</topology>
    </subcellularLocation>
</comment>
<comment type="alternative products">
    <event type="alternative splicing"/>
    <isoform>
        <id>Q9UH99-1</id>
        <name>1</name>
        <sequence type="displayed"/>
    </isoform>
    <isoform>
        <id>Q9UH99-2</id>
        <name>2</name>
        <sequence type="described" ref="VSP_045882"/>
    </isoform>
    <isoform>
        <id>Q9UH99-3</id>
        <name>3</name>
        <sequence type="described" ref="VSP_053702"/>
    </isoform>
</comment>
<comment type="tissue specificity">
    <text evidence="6 8">Widely expressed. Highly expressed in heart, lung and muscle. Weakly expressed in fetal heart. Slightly overexpressed in some heart tissues form patients with congenital heart defects.</text>
</comment>
<comment type="domain">
    <text evidence="2 24">The coiled coil domains differentially mediate trimerization required for binding to nesprins and are proposed to dynamically regulate the oligomeric state by locking the SUN domain in an inactive confirmation (By similarity). The coiled coil domains are proposed to be involved in load-bearing and force transmission from the cytoskeleton.</text>
</comment>
<comment type="domain">
    <text evidence="2">The SUN domain may play a role in nuclear anchoring and/or migration.</text>
</comment>
<comment type="PTM">
    <text evidence="20">The disulfide bond with SYNE2 is required for stability of the SUN2:SYNE2/KASH2 LINC complex under tensile forces though not required for the interaction. The disulfide bond is proposed to be conserved in LINC complexes involved in force transmission.</text>
</comment>
<comment type="caution">
    <text evidence="23">It is uncertain whether Met-1 or Met-50 is the initiator.</text>
</comment>
<comment type="sequence caution" evidence="23">
    <conflict type="erroneous initiation">
        <sequence resource="EMBL-CDS" id="BAA31643"/>
    </conflict>
    <text>Extended N-terminus.</text>
</comment>
<sequence>MSRRSQRLTRYSQGDDDGSSSSGGSSVAGSQSTLFKDSPLRTLKRKSSNMKRLSPAPQLGPSSDAHTSYYSESLVHESWFPPRSSLEELHGDANWGEDLRVRRRRGTGGSESSRASGLVGRKATEDFLGSSSGYSSEDDYVGYSDVDQQSSSSRLRSAVSRAGSLLWMVATSPGRLFRLLYWWAGTTWYRLTTAASLLDVFVLTRRFSSLKTFLWFLLPLLLLTCLTYGAWYFYPYGLQTFHPALVSWWAAKDSRRPDEGWEARDSSPHFQAEQRVMSRVHSLERRLEALAAEFSSNWQKEAMRLERLELRQGAPGQGGGGGLSHEDTLALLEGLVSRREAALKEDFRRETAARIQEELSALRAEHQQDSEDLFKKIVRASQESEARIQQLKSEWQSMTQESFQESSVKELRRLEDQLAGLQQELAALALKQSSVAEEVGLLPQQIQAVRDDVESQFPAWISQFLARGGGGRVGLLQREEMQAQLRELESKILTHVAEMQGKSAREAAASLSLTLQKEGVIGVTEEQVHHIVKQALQRYSEDRIGLADYALESGGASVISTRCSETYETKTALLSLFGIPLWYHSQSPRVILQPDVHPGNCWAFQGPQGFAVVRLSARIRPTAVTLEHVPKALSPNSTISSAPKDFAIFGFDEDLQQEGTLLGKFTYDQDGEPIQTFHFQAPTMATYQVVELRILTNWGHPEYTCIYRFRVHGEPAH</sequence>
<protein>
    <recommendedName>
        <fullName>SUN domain-containing protein 2</fullName>
    </recommendedName>
    <alternativeName>
        <fullName>Protein unc-84 homolog B</fullName>
    </alternativeName>
    <alternativeName>
        <fullName>Rab5-interacting protein</fullName>
        <shortName>Rab5IP</shortName>
    </alternativeName>
    <alternativeName>
        <fullName>Sad1/unc-84 protein-like 2</fullName>
    </alternativeName>
</protein>